<feature type="chain" id="PRO_0000291198" description="Tetraacyldisaccharide 4'-kinase">
    <location>
        <begin position="1"/>
        <end position="342"/>
    </location>
</feature>
<feature type="binding site" evidence="1">
    <location>
        <begin position="68"/>
        <end position="75"/>
    </location>
    <ligand>
        <name>ATP</name>
        <dbReference type="ChEBI" id="CHEBI:30616"/>
    </ligand>
</feature>
<sequence length="342" mass="36229">MSAPGGPLARLEARLTREWQRRGALAWALTPFACVFGLCAALRRTAYAQGWKQPVDVGVPVVVVGNVTVGGTGKTPTVIALVDALRAAGFTPGVVSRGYGANVKAPTAVTPASRAAAAGDEPLLIARRTGAPVWVCPDRVAAAQALRAAHPDVDVIVSDDGLQHYRLARTVELVVFDHRLGGNGFLLPAGPLREPLSRHRDATLVNDPYSGALPPWPDTYALALTPGAAWHLDQPALRRPLSQFAHERVLAAAGIGAPERFFATLRAAGLAPATRALPDHYAFADNPFVDDAVDAILITEKDAVKLGASWRDARLWVVPVEAALDPRLIALVVEKLRGRSPA</sequence>
<comment type="function">
    <text evidence="1">Transfers the gamma-phosphate of ATP to the 4'-position of a tetraacyldisaccharide 1-phosphate intermediate (termed DS-1-P) to form tetraacyldisaccharide 1,4'-bis-phosphate (lipid IVA).</text>
</comment>
<comment type="catalytic activity">
    <reaction evidence="1">
        <text>a lipid A disaccharide + ATP = a lipid IVA + ADP + H(+)</text>
        <dbReference type="Rhea" id="RHEA:67840"/>
        <dbReference type="ChEBI" id="CHEBI:15378"/>
        <dbReference type="ChEBI" id="CHEBI:30616"/>
        <dbReference type="ChEBI" id="CHEBI:176343"/>
        <dbReference type="ChEBI" id="CHEBI:176425"/>
        <dbReference type="ChEBI" id="CHEBI:456216"/>
        <dbReference type="EC" id="2.7.1.130"/>
    </reaction>
</comment>
<comment type="pathway">
    <text evidence="1">Glycolipid biosynthesis; lipid IV(A) biosynthesis; lipid IV(A) from (3R)-3-hydroxytetradecanoyl-[acyl-carrier-protein] and UDP-N-acetyl-alpha-D-glucosamine: step 6/6.</text>
</comment>
<comment type="similarity">
    <text evidence="1">Belongs to the LpxK family.</text>
</comment>
<name>LPXK_BURCH</name>
<reference key="1">
    <citation type="submission" date="2006-08" db="EMBL/GenBank/DDBJ databases">
        <title>Complete sequence of chromosome 1 of Burkholderia cenocepacia HI2424.</title>
        <authorList>
            <person name="Copeland A."/>
            <person name="Lucas S."/>
            <person name="Lapidus A."/>
            <person name="Barry K."/>
            <person name="Detter J.C."/>
            <person name="Glavina del Rio T."/>
            <person name="Hammon N."/>
            <person name="Israni S."/>
            <person name="Pitluck S."/>
            <person name="Chain P."/>
            <person name="Malfatti S."/>
            <person name="Shin M."/>
            <person name="Vergez L."/>
            <person name="Schmutz J."/>
            <person name="Larimer F."/>
            <person name="Land M."/>
            <person name="Hauser L."/>
            <person name="Kyrpides N."/>
            <person name="Kim E."/>
            <person name="LiPuma J.J."/>
            <person name="Gonzalez C.F."/>
            <person name="Konstantinidis K."/>
            <person name="Tiedje J.M."/>
            <person name="Richardson P."/>
        </authorList>
    </citation>
    <scope>NUCLEOTIDE SEQUENCE [LARGE SCALE GENOMIC DNA]</scope>
    <source>
        <strain>HI2424</strain>
    </source>
</reference>
<accession>A0K9W8</accession>
<evidence type="ECO:0000255" key="1">
    <source>
        <dbReference type="HAMAP-Rule" id="MF_00409"/>
    </source>
</evidence>
<keyword id="KW-0067">ATP-binding</keyword>
<keyword id="KW-0418">Kinase</keyword>
<keyword id="KW-0441">Lipid A biosynthesis</keyword>
<keyword id="KW-0444">Lipid biosynthesis</keyword>
<keyword id="KW-0443">Lipid metabolism</keyword>
<keyword id="KW-0547">Nucleotide-binding</keyword>
<keyword id="KW-0808">Transferase</keyword>
<organism>
    <name type="scientific">Burkholderia cenocepacia (strain HI2424)</name>
    <dbReference type="NCBI Taxonomy" id="331272"/>
    <lineage>
        <taxon>Bacteria</taxon>
        <taxon>Pseudomonadati</taxon>
        <taxon>Pseudomonadota</taxon>
        <taxon>Betaproteobacteria</taxon>
        <taxon>Burkholderiales</taxon>
        <taxon>Burkholderiaceae</taxon>
        <taxon>Burkholderia</taxon>
        <taxon>Burkholderia cepacia complex</taxon>
    </lineage>
</organism>
<dbReference type="EC" id="2.7.1.130" evidence="1"/>
<dbReference type="EMBL" id="CP000458">
    <property type="protein sequence ID" value="ABK09295.1"/>
    <property type="molecule type" value="Genomic_DNA"/>
</dbReference>
<dbReference type="RefSeq" id="WP_011546042.1">
    <property type="nucleotide sequence ID" value="NC_008542.1"/>
</dbReference>
<dbReference type="SMR" id="A0K9W8"/>
<dbReference type="KEGG" id="bch:Bcen2424_2545"/>
<dbReference type="HOGENOM" id="CLU_038816_2_0_4"/>
<dbReference type="UniPathway" id="UPA00359">
    <property type="reaction ID" value="UER00482"/>
</dbReference>
<dbReference type="GO" id="GO:0005886">
    <property type="term" value="C:plasma membrane"/>
    <property type="evidence" value="ECO:0007669"/>
    <property type="project" value="TreeGrafter"/>
</dbReference>
<dbReference type="GO" id="GO:0005524">
    <property type="term" value="F:ATP binding"/>
    <property type="evidence" value="ECO:0007669"/>
    <property type="project" value="UniProtKB-UniRule"/>
</dbReference>
<dbReference type="GO" id="GO:0009029">
    <property type="term" value="F:tetraacyldisaccharide 4'-kinase activity"/>
    <property type="evidence" value="ECO:0007669"/>
    <property type="project" value="UniProtKB-UniRule"/>
</dbReference>
<dbReference type="GO" id="GO:0009245">
    <property type="term" value="P:lipid A biosynthetic process"/>
    <property type="evidence" value="ECO:0007669"/>
    <property type="project" value="UniProtKB-UniRule"/>
</dbReference>
<dbReference type="GO" id="GO:0009244">
    <property type="term" value="P:lipopolysaccharide core region biosynthetic process"/>
    <property type="evidence" value="ECO:0007669"/>
    <property type="project" value="TreeGrafter"/>
</dbReference>
<dbReference type="HAMAP" id="MF_00409">
    <property type="entry name" value="LpxK"/>
    <property type="match status" value="1"/>
</dbReference>
<dbReference type="InterPro" id="IPR003758">
    <property type="entry name" value="LpxK"/>
</dbReference>
<dbReference type="InterPro" id="IPR027417">
    <property type="entry name" value="P-loop_NTPase"/>
</dbReference>
<dbReference type="NCBIfam" id="TIGR00682">
    <property type="entry name" value="lpxK"/>
    <property type="match status" value="1"/>
</dbReference>
<dbReference type="PANTHER" id="PTHR42724">
    <property type="entry name" value="TETRAACYLDISACCHARIDE 4'-KINASE"/>
    <property type="match status" value="1"/>
</dbReference>
<dbReference type="PANTHER" id="PTHR42724:SF1">
    <property type="entry name" value="TETRAACYLDISACCHARIDE 4'-KINASE, MITOCHONDRIAL-RELATED"/>
    <property type="match status" value="1"/>
</dbReference>
<dbReference type="Pfam" id="PF02606">
    <property type="entry name" value="LpxK"/>
    <property type="match status" value="1"/>
</dbReference>
<dbReference type="SUPFAM" id="SSF52540">
    <property type="entry name" value="P-loop containing nucleoside triphosphate hydrolases"/>
    <property type="match status" value="1"/>
</dbReference>
<gene>
    <name evidence="1" type="primary">lpxK</name>
    <name type="ordered locus">Bcen2424_2545</name>
</gene>
<protein>
    <recommendedName>
        <fullName evidence="1">Tetraacyldisaccharide 4'-kinase</fullName>
        <ecNumber evidence="1">2.7.1.130</ecNumber>
    </recommendedName>
    <alternativeName>
        <fullName evidence="1">Lipid A 4'-kinase</fullName>
    </alternativeName>
</protein>
<proteinExistence type="inferred from homology"/>